<geneLocation type="chloroplast"/>
<organism>
    <name type="scientific">Spirogyra maxima</name>
    <name type="common">Green alga</name>
    <dbReference type="NCBI Taxonomy" id="3180"/>
    <lineage>
        <taxon>Eukaryota</taxon>
        <taxon>Viridiplantae</taxon>
        <taxon>Streptophyta</taxon>
        <taxon>Zygnematophyceae</taxon>
        <taxon>Zygnematophycidae</taxon>
        <taxon>Zygnematales</taxon>
        <taxon>Zygnemataceae</taxon>
        <taxon>Spirogyra</taxon>
    </lineage>
</organism>
<dbReference type="EMBL" id="L07932">
    <property type="protein sequence ID" value="AAB01591.1"/>
    <property type="molecule type" value="Genomic_DNA"/>
</dbReference>
<dbReference type="RefSeq" id="YP_009258406.1">
    <property type="nucleotide sequence ID" value="NC_030355.1"/>
</dbReference>
<dbReference type="SMR" id="P42342"/>
<dbReference type="GeneID" id="27984693"/>
<dbReference type="GO" id="GO:0009507">
    <property type="term" value="C:chloroplast"/>
    <property type="evidence" value="ECO:0007669"/>
    <property type="project" value="UniProtKB-SubCell"/>
</dbReference>
<dbReference type="GO" id="GO:0015935">
    <property type="term" value="C:small ribosomal subunit"/>
    <property type="evidence" value="ECO:0007669"/>
    <property type="project" value="InterPro"/>
</dbReference>
<dbReference type="GO" id="GO:0019843">
    <property type="term" value="F:rRNA binding"/>
    <property type="evidence" value="ECO:0007669"/>
    <property type="project" value="UniProtKB-UniRule"/>
</dbReference>
<dbReference type="GO" id="GO:0003735">
    <property type="term" value="F:structural constituent of ribosome"/>
    <property type="evidence" value="ECO:0007669"/>
    <property type="project" value="InterPro"/>
</dbReference>
<dbReference type="GO" id="GO:0006412">
    <property type="term" value="P:translation"/>
    <property type="evidence" value="ECO:0007669"/>
    <property type="project" value="UniProtKB-UniRule"/>
</dbReference>
<dbReference type="CDD" id="cd14871">
    <property type="entry name" value="uS7_Chloroplast"/>
    <property type="match status" value="1"/>
</dbReference>
<dbReference type="FunFam" id="1.10.455.10:FF:000001">
    <property type="entry name" value="30S ribosomal protein S7"/>
    <property type="match status" value="1"/>
</dbReference>
<dbReference type="Gene3D" id="1.10.455.10">
    <property type="entry name" value="Ribosomal protein S7 domain"/>
    <property type="match status" value="1"/>
</dbReference>
<dbReference type="HAMAP" id="MF_00480_B">
    <property type="entry name" value="Ribosomal_uS7_B"/>
    <property type="match status" value="1"/>
</dbReference>
<dbReference type="InterPro" id="IPR000235">
    <property type="entry name" value="Ribosomal_uS7"/>
</dbReference>
<dbReference type="InterPro" id="IPR005717">
    <property type="entry name" value="Ribosomal_uS7_bac/org-type"/>
</dbReference>
<dbReference type="InterPro" id="IPR020606">
    <property type="entry name" value="Ribosomal_uS7_CS"/>
</dbReference>
<dbReference type="InterPro" id="IPR023798">
    <property type="entry name" value="Ribosomal_uS7_dom"/>
</dbReference>
<dbReference type="InterPro" id="IPR036823">
    <property type="entry name" value="Ribosomal_uS7_dom_sf"/>
</dbReference>
<dbReference type="NCBIfam" id="TIGR01029">
    <property type="entry name" value="rpsG_bact"/>
    <property type="match status" value="1"/>
</dbReference>
<dbReference type="PANTHER" id="PTHR11205">
    <property type="entry name" value="RIBOSOMAL PROTEIN S7"/>
    <property type="match status" value="1"/>
</dbReference>
<dbReference type="Pfam" id="PF00177">
    <property type="entry name" value="Ribosomal_S7"/>
    <property type="match status" value="1"/>
</dbReference>
<dbReference type="PIRSF" id="PIRSF002122">
    <property type="entry name" value="RPS7p_RPS7a_RPS5e_RPS7o"/>
    <property type="match status" value="1"/>
</dbReference>
<dbReference type="SUPFAM" id="SSF47973">
    <property type="entry name" value="Ribosomal protein S7"/>
    <property type="match status" value="1"/>
</dbReference>
<dbReference type="PROSITE" id="PS00052">
    <property type="entry name" value="RIBOSOMAL_S7"/>
    <property type="match status" value="1"/>
</dbReference>
<feature type="chain" id="PRO_0000124509" description="Small ribosomal subunit protein uS7c">
    <location>
        <begin position="1"/>
        <end position="155"/>
    </location>
</feature>
<evidence type="ECO:0000250" key="1"/>
<evidence type="ECO:0000305" key="2"/>
<comment type="function">
    <text evidence="1">One of the primary rRNA binding proteins, it binds directly to 16S rRNA where it nucleates assembly of the head domain of the 30S subunit.</text>
</comment>
<comment type="subunit">
    <text>Part of the 30S ribosomal subunit.</text>
</comment>
<comment type="subcellular location">
    <subcellularLocation>
        <location>Plastid</location>
        <location>Chloroplast</location>
    </subcellularLocation>
</comment>
<comment type="similarity">
    <text evidence="2">Belongs to the universal ribosomal protein uS7 family.</text>
</comment>
<name>RR7_SPIMX</name>
<protein>
    <recommendedName>
        <fullName evidence="2">Small ribosomal subunit protein uS7c</fullName>
    </recommendedName>
    <alternativeName>
        <fullName>30S ribosomal protein S7, chloroplastic</fullName>
    </alternativeName>
</protein>
<accession>P42342</accession>
<keyword id="KW-0150">Chloroplast</keyword>
<keyword id="KW-0934">Plastid</keyword>
<keyword id="KW-0687">Ribonucleoprotein</keyword>
<keyword id="KW-0689">Ribosomal protein</keyword>
<keyword id="KW-0694">RNA-binding</keyword>
<keyword id="KW-0699">rRNA-binding</keyword>
<gene>
    <name type="primary">rps7</name>
</gene>
<reference key="1">
    <citation type="journal article" date="1993" name="J. Phycol.">
        <title>The evolutionary mystery of the rps12 gene in Spirogyra maxima.</title>
        <authorList>
            <person name="Lew K.A."/>
            <person name="Manhart J.R."/>
        </authorList>
    </citation>
    <scope>NUCLEOTIDE SEQUENCE [GENOMIC DNA]</scope>
</reference>
<proteinExistence type="inferred from homology"/>
<sequence>MSRRSNTVSRPTKPDPIYRNRLVNMLVNRILKNGKKSLGYRILYTALKTIKQKTKKNPLSVLRQAVRRATPNVVVKARRRGGSTYQVPIEVKPSQGRALAIRWLLSAARKRSGRSMGLKLSYELMDAARQTGNAIRKREETHRMAEANRAFAHFR</sequence>